<gene>
    <name evidence="3" type="primary">PHA1_1</name>
</gene>
<comment type="function">
    <text evidence="5">Major toxin that belongs to the bicyclic heptapeptides called phallotoxins (PubMed:18025465). Although structurally related to amatoxins, phallotoxins have a different mode of action, which is the stabilization of F-actin (PubMed:18025465). Phallotoxins are poisonous when administered parenterally, but not orally because of poor absorption (PubMed:18025465).</text>
</comment>
<comment type="PTM">
    <text evidence="1 5">Processed by the macrocyclase-peptidase enzyme POPB to yield a toxic cyclic heptapeptide (By similarity). POPB first removes 10 residues from the N-terminus (By similarity). Conformational trapping of the remaining peptide forces the enzyme to release this intermediate rather than proceed to macrocyclization (By similarity). The enzyme rebinds the remaining peptide in a different conformation and catalyzes macrocyclization of the N-terminal 7 residues (PubMed:18025465).</text>
</comment>
<comment type="similarity">
    <text evidence="4">Belongs to the MSDIN fungal toxin family.</text>
</comment>
<feature type="propeptide" id="PRO_0000443608" evidence="5">
    <location>
        <begin position="1"/>
        <end position="10"/>
    </location>
</feature>
<feature type="peptide" id="PRO_0000443609" description="Phallacidin" evidence="5">
    <location>
        <begin position="11"/>
        <end position="17"/>
    </location>
</feature>
<feature type="propeptide" id="PRO_0000443610" evidence="5">
    <location>
        <begin position="18"/>
        <end position="34"/>
    </location>
</feature>
<feature type="cross-link" description="Cyclopeptide (Ala-Pro)" evidence="5">
    <location>
        <begin position="11"/>
        <end position="17"/>
    </location>
</feature>
<feature type="cross-link" description="2'-cysteinyl-6'-hydroxytryptophan sulfoxide (Trp-Cys)" evidence="2">
    <location>
        <begin position="12"/>
        <end position="16"/>
    </location>
</feature>
<accession>A8W7M7</accession>
<dbReference type="EMBL" id="EU196142">
    <property type="protein sequence ID" value="ABW87771.1"/>
    <property type="molecule type" value="Genomic_DNA"/>
</dbReference>
<dbReference type="EMBL" id="EU196143">
    <property type="protein sequence ID" value="ABW87772.1"/>
    <property type="molecule type" value="mRNA"/>
</dbReference>
<dbReference type="GO" id="GO:0090729">
    <property type="term" value="F:toxin activity"/>
    <property type="evidence" value="ECO:0007669"/>
    <property type="project" value="UniProtKB-KW"/>
</dbReference>
<dbReference type="InterPro" id="IPR027582">
    <property type="entry name" value="Amanitin/phalloidin"/>
</dbReference>
<dbReference type="NCBIfam" id="TIGR04309">
    <property type="entry name" value="amanitin"/>
    <property type="match status" value="1"/>
</dbReference>
<sequence>MSDINATRLPAWLVDCPCVGDDVNRLLTRGESLC</sequence>
<name>PHAT1_AMABI</name>
<reference key="1">
    <citation type="journal article" date="2007" name="Proc. Natl. Acad. Sci. U.S.A.">
        <title>Gene family encoding the major toxins of lethal Amanita mushrooms.</title>
        <authorList>
            <person name="Hallen H.E."/>
            <person name="Luo H."/>
            <person name="Scott-Craig J.S."/>
            <person name="Walton J.D."/>
        </authorList>
    </citation>
    <scope>NUCLEOTIDE SEQUENCE [GENOMIC DNA / MRNA]</scope>
    <scope>FUNCTION</scope>
</reference>
<evidence type="ECO:0000250" key="1">
    <source>
        <dbReference type="UniProtKB" id="A0A067SLB9"/>
    </source>
</evidence>
<evidence type="ECO:0000250" key="2">
    <source>
        <dbReference type="UniProtKB" id="P85421"/>
    </source>
</evidence>
<evidence type="ECO:0000303" key="3">
    <source>
    </source>
</evidence>
<evidence type="ECO:0000305" key="4"/>
<evidence type="ECO:0000305" key="5">
    <source>
    </source>
</evidence>
<organism>
    <name type="scientific">Amanita bisporigera</name>
    <name type="common">Destroying angel</name>
    <dbReference type="NCBI Taxonomy" id="87325"/>
    <lineage>
        <taxon>Eukaryota</taxon>
        <taxon>Fungi</taxon>
        <taxon>Dikarya</taxon>
        <taxon>Basidiomycota</taxon>
        <taxon>Agaricomycotina</taxon>
        <taxon>Agaricomycetes</taxon>
        <taxon>Agaricomycetidae</taxon>
        <taxon>Agaricales</taxon>
        <taxon>Pluteineae</taxon>
        <taxon>Amanitaceae</taxon>
        <taxon>Amanita</taxon>
    </lineage>
</organism>
<protein>
    <recommendedName>
        <fullName evidence="3">Phallacidin proprotein 1</fullName>
    </recommendedName>
    <component>
        <recommendedName>
            <fullName evidence="3">Phallacidin</fullName>
        </recommendedName>
    </component>
</protein>
<proteinExistence type="inferred from homology"/>
<keyword id="KW-0883">Thioether bond</keyword>
<keyword id="KW-0800">Toxin</keyword>